<reference key="1">
    <citation type="journal article" date="1988" name="J. Biol. Chem.">
        <title>Multiple genes provide the basis for antifreeze protein diversity and dosage in the ocean pout, Macrozoarces americanus.</title>
        <authorList>
            <person name="Hew C.-L."/>
            <person name="Wang N.-C."/>
            <person name="Joshi S."/>
            <person name="Fletcher G.L."/>
            <person name="Scott G.K."/>
            <person name="Hayes P.H."/>
            <person name="Buettner B."/>
            <person name="Davies P.L."/>
        </authorList>
    </citation>
    <scope>NUCLEOTIDE SEQUENCE [MRNA]</scope>
</reference>
<organism>
    <name type="scientific">Zoarces americanus</name>
    <name type="common">Ocean pout</name>
    <name type="synonym">Macrozoarces americanus</name>
    <dbReference type="NCBI Taxonomy" id="8199"/>
    <lineage>
        <taxon>Eukaryota</taxon>
        <taxon>Metazoa</taxon>
        <taxon>Chordata</taxon>
        <taxon>Craniata</taxon>
        <taxon>Vertebrata</taxon>
        <taxon>Euteleostomi</taxon>
        <taxon>Actinopterygii</taxon>
        <taxon>Neopterygii</taxon>
        <taxon>Teleostei</taxon>
        <taxon>Neoteleostei</taxon>
        <taxon>Acanthomorphata</taxon>
        <taxon>Eupercaria</taxon>
        <taxon>Perciformes</taxon>
        <taxon>Cottioidei</taxon>
        <taxon>Zoarcales</taxon>
        <taxon>Zoarcidae</taxon>
        <taxon>Zoarcinae</taxon>
        <taxon>Zoarces</taxon>
    </lineage>
</organism>
<evidence type="ECO:0000250" key="1"/>
<evidence type="ECO:0000255" key="2">
    <source>
        <dbReference type="PROSITE-ProRule" id="PRU00021"/>
    </source>
</evidence>
<evidence type="ECO:0000305" key="3"/>
<feature type="signal peptide" evidence="1">
    <location>
        <begin position="1"/>
        <end position="21"/>
    </location>
</feature>
<feature type="chain" id="PRO_0000001692" description="Ice-structuring protein C7">
    <location>
        <begin position="22"/>
        <end position="87"/>
    </location>
</feature>
<feature type="domain" description="AFP-like" evidence="2">
    <location>
        <begin position="24"/>
        <end position="83"/>
    </location>
</feature>
<feature type="site" description="Important for ice-binding" evidence="1">
    <location>
        <position position="29"/>
    </location>
</feature>
<feature type="site" description="Important for ice-binding" evidence="1">
    <location>
        <position position="34"/>
    </location>
</feature>
<feature type="site" description="Important for ice-binding" evidence="1">
    <location>
        <position position="38"/>
    </location>
</feature>
<feature type="site" description="Important for ice-binding" evidence="1">
    <location>
        <position position="64"/>
    </location>
</feature>
<protein>
    <recommendedName>
        <fullName>Ice-structuring protein C7</fullName>
        <shortName>ISP C7</shortName>
    </recommendedName>
    <alternativeName>
        <fullName>Antifreeze protein C7</fullName>
    </alternativeName>
</protein>
<sequence length="87" mass="9229">MKSVILTGLLFVLLCVDHMTASQSVVATQLIPINTALTPVMMEGKVTNPIGIPFAEMSQIVGKQVNTPVAKGQTIMPNMVKTYAAGK</sequence>
<proteinExistence type="inferred from homology"/>
<accession>P19604</accession>
<name>ANPD_ZOAAM</name>
<comment type="function">
    <text evidence="1">Contributes to protect fish blood from freezing at subzero sea water temperatures. Lowers the blood freezing point. Binds to nascent ice crystals and prevents further growth (By similarity).</text>
</comment>
<comment type="subcellular location">
    <subcellularLocation>
        <location evidence="1">Secreted</location>
    </subcellularLocation>
</comment>
<comment type="similarity">
    <text evidence="3">Belongs to the type-III AFP family.</text>
</comment>
<dbReference type="PIR" id="B31075">
    <property type="entry name" value="B31075"/>
</dbReference>
<dbReference type="SMR" id="P19604"/>
<dbReference type="GO" id="GO:0005576">
    <property type="term" value="C:extracellular region"/>
    <property type="evidence" value="ECO:0007669"/>
    <property type="project" value="UniProtKB-SubCell"/>
</dbReference>
<dbReference type="CDD" id="cd11617">
    <property type="entry name" value="Antifreeze_III"/>
    <property type="match status" value="1"/>
</dbReference>
<dbReference type="Gene3D" id="3.90.1210.10">
    <property type="entry name" value="Antifreeze-like/N-acetylneuraminic acid synthase C-terminal domain"/>
    <property type="match status" value="1"/>
</dbReference>
<dbReference type="InterPro" id="IPR006190">
    <property type="entry name" value="AFP_Neu5c_C"/>
</dbReference>
<dbReference type="InterPro" id="IPR036732">
    <property type="entry name" value="AFP_Neu5c_C_sf"/>
</dbReference>
<dbReference type="InterPro" id="IPR006013">
    <property type="entry name" value="Antifreeze_III"/>
</dbReference>
<dbReference type="InterPro" id="IPR013974">
    <property type="entry name" value="SAF"/>
</dbReference>
<dbReference type="Pfam" id="PF08666">
    <property type="entry name" value="SAF"/>
    <property type="match status" value="1"/>
</dbReference>
<dbReference type="PRINTS" id="PR00357">
    <property type="entry name" value="ANTIFREEZIII"/>
</dbReference>
<dbReference type="SMART" id="SM00858">
    <property type="entry name" value="SAF"/>
    <property type="match status" value="1"/>
</dbReference>
<dbReference type="SUPFAM" id="SSF51269">
    <property type="entry name" value="AFP III-like domain"/>
    <property type="match status" value="1"/>
</dbReference>
<dbReference type="PROSITE" id="PS50844">
    <property type="entry name" value="AFP_LIKE"/>
    <property type="match status" value="1"/>
</dbReference>
<keyword id="KW-0047">Antifreeze protein</keyword>
<keyword id="KW-0964">Secreted</keyword>
<keyword id="KW-0732">Signal</keyword>